<proteinExistence type="evidence at protein level"/>
<reference key="1">
    <citation type="journal article" date="2004" name="Nature">
        <title>Genome sequence of the Brown Norway rat yields insights into mammalian evolution.</title>
        <authorList>
            <person name="Gibbs R.A."/>
            <person name="Weinstock G.M."/>
            <person name="Metzker M.L."/>
            <person name="Muzny D.M."/>
            <person name="Sodergren E.J."/>
            <person name="Scherer S."/>
            <person name="Scott G."/>
            <person name="Steffen D."/>
            <person name="Worley K.C."/>
            <person name="Burch P.E."/>
            <person name="Okwuonu G."/>
            <person name="Hines S."/>
            <person name="Lewis L."/>
            <person name="Deramo C."/>
            <person name="Delgado O."/>
            <person name="Dugan-Rocha S."/>
            <person name="Miner G."/>
            <person name="Morgan M."/>
            <person name="Hawes A."/>
            <person name="Gill R."/>
            <person name="Holt R.A."/>
            <person name="Adams M.D."/>
            <person name="Amanatides P.G."/>
            <person name="Baden-Tillson H."/>
            <person name="Barnstead M."/>
            <person name="Chin S."/>
            <person name="Evans C.A."/>
            <person name="Ferriera S."/>
            <person name="Fosler C."/>
            <person name="Glodek A."/>
            <person name="Gu Z."/>
            <person name="Jennings D."/>
            <person name="Kraft C.L."/>
            <person name="Nguyen T."/>
            <person name="Pfannkoch C.M."/>
            <person name="Sitter C."/>
            <person name="Sutton G.G."/>
            <person name="Venter J.C."/>
            <person name="Woodage T."/>
            <person name="Smith D."/>
            <person name="Lee H.-M."/>
            <person name="Gustafson E."/>
            <person name="Cahill P."/>
            <person name="Kana A."/>
            <person name="Doucette-Stamm L."/>
            <person name="Weinstock K."/>
            <person name="Fechtel K."/>
            <person name="Weiss R.B."/>
            <person name="Dunn D.M."/>
            <person name="Green E.D."/>
            <person name="Blakesley R.W."/>
            <person name="Bouffard G.G."/>
            <person name="De Jong P.J."/>
            <person name="Osoegawa K."/>
            <person name="Zhu B."/>
            <person name="Marra M."/>
            <person name="Schein J."/>
            <person name="Bosdet I."/>
            <person name="Fjell C."/>
            <person name="Jones S."/>
            <person name="Krzywinski M."/>
            <person name="Mathewson C."/>
            <person name="Siddiqui A."/>
            <person name="Wye N."/>
            <person name="McPherson J."/>
            <person name="Zhao S."/>
            <person name="Fraser C.M."/>
            <person name="Shetty J."/>
            <person name="Shatsman S."/>
            <person name="Geer K."/>
            <person name="Chen Y."/>
            <person name="Abramzon S."/>
            <person name="Nierman W.C."/>
            <person name="Havlak P.H."/>
            <person name="Chen R."/>
            <person name="Durbin K.J."/>
            <person name="Egan A."/>
            <person name="Ren Y."/>
            <person name="Song X.-Z."/>
            <person name="Li B."/>
            <person name="Liu Y."/>
            <person name="Qin X."/>
            <person name="Cawley S."/>
            <person name="Cooney A.J."/>
            <person name="D'Souza L.M."/>
            <person name="Martin K."/>
            <person name="Wu J.Q."/>
            <person name="Gonzalez-Garay M.L."/>
            <person name="Jackson A.R."/>
            <person name="Kalafus K.J."/>
            <person name="McLeod M.P."/>
            <person name="Milosavljevic A."/>
            <person name="Virk D."/>
            <person name="Volkov A."/>
            <person name="Wheeler D.A."/>
            <person name="Zhang Z."/>
            <person name="Bailey J.A."/>
            <person name="Eichler E.E."/>
            <person name="Tuzun E."/>
            <person name="Birney E."/>
            <person name="Mongin E."/>
            <person name="Ureta-Vidal A."/>
            <person name="Woodwark C."/>
            <person name="Zdobnov E."/>
            <person name="Bork P."/>
            <person name="Suyama M."/>
            <person name="Torrents D."/>
            <person name="Alexandersson M."/>
            <person name="Trask B.J."/>
            <person name="Young J.M."/>
            <person name="Huang H."/>
            <person name="Wang H."/>
            <person name="Xing H."/>
            <person name="Daniels S."/>
            <person name="Gietzen D."/>
            <person name="Schmidt J."/>
            <person name="Stevens K."/>
            <person name="Vitt U."/>
            <person name="Wingrove J."/>
            <person name="Camara F."/>
            <person name="Mar Alba M."/>
            <person name="Abril J.F."/>
            <person name="Guigo R."/>
            <person name="Smit A."/>
            <person name="Dubchak I."/>
            <person name="Rubin E.M."/>
            <person name="Couronne O."/>
            <person name="Poliakov A."/>
            <person name="Huebner N."/>
            <person name="Ganten D."/>
            <person name="Goesele C."/>
            <person name="Hummel O."/>
            <person name="Kreitler T."/>
            <person name="Lee Y.-A."/>
            <person name="Monti J."/>
            <person name="Schulz H."/>
            <person name="Zimdahl H."/>
            <person name="Himmelbauer H."/>
            <person name="Lehrach H."/>
            <person name="Jacob H.J."/>
            <person name="Bromberg S."/>
            <person name="Gullings-Handley J."/>
            <person name="Jensen-Seaman M.I."/>
            <person name="Kwitek A.E."/>
            <person name="Lazar J."/>
            <person name="Pasko D."/>
            <person name="Tonellato P.J."/>
            <person name="Twigger S."/>
            <person name="Ponting C.P."/>
            <person name="Duarte J.M."/>
            <person name="Rice S."/>
            <person name="Goodstadt L."/>
            <person name="Beatson S.A."/>
            <person name="Emes R.D."/>
            <person name="Winter E.E."/>
            <person name="Webber C."/>
            <person name="Brandt P."/>
            <person name="Nyakatura G."/>
            <person name="Adetobi M."/>
            <person name="Chiaromonte F."/>
            <person name="Elnitski L."/>
            <person name="Eswara P."/>
            <person name="Hardison R.C."/>
            <person name="Hou M."/>
            <person name="Kolbe D."/>
            <person name="Makova K."/>
            <person name="Miller W."/>
            <person name="Nekrutenko A."/>
            <person name="Riemer C."/>
            <person name="Schwartz S."/>
            <person name="Taylor J."/>
            <person name="Yang S."/>
            <person name="Zhang Y."/>
            <person name="Lindpaintner K."/>
            <person name="Andrews T.D."/>
            <person name="Caccamo M."/>
            <person name="Clamp M."/>
            <person name="Clarke L."/>
            <person name="Curwen V."/>
            <person name="Durbin R.M."/>
            <person name="Eyras E."/>
            <person name="Searle S.M."/>
            <person name="Cooper G.M."/>
            <person name="Batzoglou S."/>
            <person name="Brudno M."/>
            <person name="Sidow A."/>
            <person name="Stone E.A."/>
            <person name="Payseur B.A."/>
            <person name="Bourque G."/>
            <person name="Lopez-Otin C."/>
            <person name="Puente X.S."/>
            <person name="Chakrabarti K."/>
            <person name="Chatterji S."/>
            <person name="Dewey C."/>
            <person name="Pachter L."/>
            <person name="Bray N."/>
            <person name="Yap V.B."/>
            <person name="Caspi A."/>
            <person name="Tesler G."/>
            <person name="Pevzner P.A."/>
            <person name="Haussler D."/>
            <person name="Roskin K.M."/>
            <person name="Baertsch R."/>
            <person name="Clawson H."/>
            <person name="Furey T.S."/>
            <person name="Hinrichs A.S."/>
            <person name="Karolchik D."/>
            <person name="Kent W.J."/>
            <person name="Rosenbloom K.R."/>
            <person name="Trumbower H."/>
            <person name="Weirauch M."/>
            <person name="Cooper D.N."/>
            <person name="Stenson P.D."/>
            <person name="Ma B."/>
            <person name="Brent M."/>
            <person name="Arumugam M."/>
            <person name="Shteynberg D."/>
            <person name="Copley R.R."/>
            <person name="Taylor M.S."/>
            <person name="Riethman H."/>
            <person name="Mudunuri U."/>
            <person name="Peterson J."/>
            <person name="Guyer M."/>
            <person name="Felsenfeld A."/>
            <person name="Old S."/>
            <person name="Mockrin S."/>
            <person name="Collins F.S."/>
        </authorList>
    </citation>
    <scope>NUCLEOTIDE SEQUENCE [LARGE SCALE GENOMIC DNA]</scope>
    <source>
        <strain>Brown Norway</strain>
    </source>
</reference>
<reference key="2">
    <citation type="submission" date="2000-12" db="EMBL/GenBank/DDBJ databases">
        <authorList>
            <person name="Soares M.B."/>
        </authorList>
    </citation>
    <scope>NUCLEOTIDE SEQUENCE [MRNA] OF 131-163</scope>
    <source>
        <strain>Sprague-Dawley</strain>
    </source>
</reference>
<reference key="3">
    <citation type="journal article" date="2000" name="EMBO J.">
        <title>A SNARE complex mediating fusion of late endosomes defines conserved properties of SNARE structure and function.</title>
        <authorList>
            <person name="Antonin W."/>
            <person name="Holroyd C."/>
            <person name="Fasshauer D."/>
            <person name="Pabst S."/>
            <person name="Fischer von Mollard G."/>
            <person name="Jahn R."/>
        </authorList>
    </citation>
    <scope>SNARE COMPLEX CHARACTERIZATION</scope>
</reference>
<reference key="4">
    <citation type="journal article" date="2004" name="EMBO Rep.">
        <title>Combinatorial SNARE complexes with VAMP7 or VAMP8 define different late endocytic fusion events.</title>
        <authorList>
            <person name="Pryor P.R."/>
            <person name="Mullock B.M."/>
            <person name="Bright N.A."/>
            <person name="Lindsay M.R."/>
            <person name="Gray S.R."/>
            <person name="Richardson S.C.W."/>
            <person name="Stewart A."/>
            <person name="James D.E."/>
            <person name="Piper R.C."/>
            <person name="Luzio J.P."/>
        </authorList>
    </citation>
    <scope>SNARE COMPLEX CHARACTERIZATION</scope>
</reference>
<protein>
    <recommendedName>
        <fullName>Vesicle transport through interaction with t-SNAREs homolog 1B</fullName>
    </recommendedName>
    <alternativeName>
        <fullName>Vesicle transport v-SNARE protein Vti1-like 1</fullName>
    </alternativeName>
    <alternativeName>
        <fullName>Vti1-rp1</fullName>
    </alternativeName>
</protein>
<dbReference type="EMBL" id="AC111403">
    <property type="status" value="NOT_ANNOTATED_CDS"/>
    <property type="molecule type" value="mRNA"/>
</dbReference>
<dbReference type="EMBL" id="BF413866">
    <property type="status" value="NOT_ANNOTATED_CDS"/>
    <property type="molecule type" value="mRNA"/>
</dbReference>
<dbReference type="RefSeq" id="XP_038967518.1">
    <property type="nucleotide sequence ID" value="XM_039111590.2"/>
</dbReference>
<dbReference type="SMR" id="P58200"/>
<dbReference type="CORUM" id="P58200"/>
<dbReference type="FunCoup" id="P58200">
    <property type="interactions" value="778"/>
</dbReference>
<dbReference type="IntAct" id="P58200">
    <property type="interactions" value="3"/>
</dbReference>
<dbReference type="MINT" id="P58200"/>
<dbReference type="STRING" id="10116.ENSRNOP00000070613"/>
<dbReference type="GlyGen" id="P58200">
    <property type="glycosylation" value="1 site"/>
</dbReference>
<dbReference type="PhosphoSitePlus" id="P58200"/>
<dbReference type="SwissPalm" id="P58200"/>
<dbReference type="jPOST" id="P58200"/>
<dbReference type="PaxDb" id="10116-ENSRNOP00000015814"/>
<dbReference type="Ensembl" id="ENSRNOT00000090407.2">
    <property type="protein sequence ID" value="ENSRNOP00000070613.2"/>
    <property type="gene ID" value="ENSRNOG00000060436.2"/>
</dbReference>
<dbReference type="GeneID" id="100359512"/>
<dbReference type="AGR" id="RGD:2323682"/>
<dbReference type="RGD" id="2323682">
    <property type="gene designation" value="Vti1b"/>
</dbReference>
<dbReference type="eggNOG" id="KOG1666">
    <property type="taxonomic scope" value="Eukaryota"/>
</dbReference>
<dbReference type="GeneTree" id="ENSGT00950000183192"/>
<dbReference type="InParanoid" id="P58200"/>
<dbReference type="OMA" id="YRRVMTN"/>
<dbReference type="OrthoDB" id="430637at2759"/>
<dbReference type="PhylomeDB" id="P58200"/>
<dbReference type="Reactome" id="R-RNO-114608">
    <property type="pathway name" value="Platelet degranulation"/>
</dbReference>
<dbReference type="PRO" id="PR:P58200"/>
<dbReference type="Proteomes" id="UP000002494">
    <property type="component" value="Chromosome 6"/>
</dbReference>
<dbReference type="GO" id="GO:0005829">
    <property type="term" value="C:cytosol"/>
    <property type="evidence" value="ECO:0007669"/>
    <property type="project" value="GOC"/>
</dbReference>
<dbReference type="GO" id="GO:0031901">
    <property type="term" value="C:early endosome membrane"/>
    <property type="evidence" value="ECO:0000266"/>
    <property type="project" value="RGD"/>
</dbReference>
<dbReference type="GO" id="GO:0005789">
    <property type="term" value="C:endoplasmic reticulum membrane"/>
    <property type="evidence" value="ECO:0000318"/>
    <property type="project" value="GO_Central"/>
</dbReference>
<dbReference type="GO" id="GO:0012507">
    <property type="term" value="C:ER to Golgi transport vesicle membrane"/>
    <property type="evidence" value="ECO:0000318"/>
    <property type="project" value="GO_Central"/>
</dbReference>
<dbReference type="GO" id="GO:0005794">
    <property type="term" value="C:Golgi apparatus"/>
    <property type="evidence" value="ECO:0000266"/>
    <property type="project" value="RGD"/>
</dbReference>
<dbReference type="GO" id="GO:0031902">
    <property type="term" value="C:late endosome membrane"/>
    <property type="evidence" value="ECO:0000250"/>
    <property type="project" value="UniProtKB"/>
</dbReference>
<dbReference type="GO" id="GO:0005765">
    <property type="term" value="C:lysosomal membrane"/>
    <property type="evidence" value="ECO:0000250"/>
    <property type="project" value="UniProtKB"/>
</dbReference>
<dbReference type="GO" id="GO:0016020">
    <property type="term" value="C:membrane"/>
    <property type="evidence" value="ECO:0000266"/>
    <property type="project" value="RGD"/>
</dbReference>
<dbReference type="GO" id="GO:0043025">
    <property type="term" value="C:neuronal cell body"/>
    <property type="evidence" value="ECO:0000314"/>
    <property type="project" value="ParkinsonsUK-UCL"/>
</dbReference>
<dbReference type="GO" id="GO:0048471">
    <property type="term" value="C:perinuclear region of cytoplasm"/>
    <property type="evidence" value="ECO:0000266"/>
    <property type="project" value="RGD"/>
</dbReference>
<dbReference type="GO" id="GO:0098954">
    <property type="term" value="C:presynaptic endosome membrane"/>
    <property type="evidence" value="ECO:0000314"/>
    <property type="project" value="SynGO"/>
</dbReference>
<dbReference type="GO" id="GO:0055037">
    <property type="term" value="C:recycling endosome"/>
    <property type="evidence" value="ECO:0000266"/>
    <property type="project" value="RGD"/>
</dbReference>
<dbReference type="GO" id="GO:0055038">
    <property type="term" value="C:recycling endosome membrane"/>
    <property type="evidence" value="ECO:0000266"/>
    <property type="project" value="RGD"/>
</dbReference>
<dbReference type="GO" id="GO:0031201">
    <property type="term" value="C:SNARE complex"/>
    <property type="evidence" value="ECO:0000314"/>
    <property type="project" value="UniProtKB"/>
</dbReference>
<dbReference type="GO" id="GO:0008021">
    <property type="term" value="C:synaptic vesicle"/>
    <property type="evidence" value="ECO:0000314"/>
    <property type="project" value="ParkinsonsUK-UCL"/>
</dbReference>
<dbReference type="GO" id="GO:0031982">
    <property type="term" value="C:vesicle"/>
    <property type="evidence" value="ECO:0000266"/>
    <property type="project" value="RGD"/>
</dbReference>
<dbReference type="GO" id="GO:0019869">
    <property type="term" value="F:chloride channel inhibitor activity"/>
    <property type="evidence" value="ECO:0000266"/>
    <property type="project" value="RGD"/>
</dbReference>
<dbReference type="GO" id="GO:0005484">
    <property type="term" value="F:SNAP receptor activity"/>
    <property type="evidence" value="ECO:0000318"/>
    <property type="project" value="GO_Central"/>
</dbReference>
<dbReference type="GO" id="GO:0000149">
    <property type="term" value="F:SNARE binding"/>
    <property type="evidence" value="ECO:0000266"/>
    <property type="project" value="RGD"/>
</dbReference>
<dbReference type="GO" id="GO:0006896">
    <property type="term" value="P:Golgi to vacuole transport"/>
    <property type="evidence" value="ECO:0000318"/>
    <property type="project" value="GO_Central"/>
</dbReference>
<dbReference type="GO" id="GO:0006891">
    <property type="term" value="P:intra-Golgi vesicle-mediated transport"/>
    <property type="evidence" value="ECO:0000318"/>
    <property type="project" value="GO_Central"/>
</dbReference>
<dbReference type="GO" id="GO:0006886">
    <property type="term" value="P:intracellular protein transport"/>
    <property type="evidence" value="ECO:0007669"/>
    <property type="project" value="InterPro"/>
</dbReference>
<dbReference type="GO" id="GO:0016236">
    <property type="term" value="P:macroautophagy"/>
    <property type="evidence" value="ECO:0000318"/>
    <property type="project" value="GO_Central"/>
</dbReference>
<dbReference type="GO" id="GO:1903076">
    <property type="term" value="P:regulation of protein localization to plasma membrane"/>
    <property type="evidence" value="ECO:0000266"/>
    <property type="project" value="RGD"/>
</dbReference>
<dbReference type="GO" id="GO:0042147">
    <property type="term" value="P:retrograde transport, endosome to Golgi"/>
    <property type="evidence" value="ECO:0000318"/>
    <property type="project" value="GO_Central"/>
</dbReference>
<dbReference type="GO" id="GO:0048280">
    <property type="term" value="P:vesicle fusion with Golgi apparatus"/>
    <property type="evidence" value="ECO:0000318"/>
    <property type="project" value="GO_Central"/>
</dbReference>
<dbReference type="CDD" id="cd15890">
    <property type="entry name" value="SNARE_Vti1b"/>
    <property type="match status" value="1"/>
</dbReference>
<dbReference type="FunFam" id="1.20.58.400:FF:000003">
    <property type="entry name" value="Vesicle transport through interaction with t-SNAREs homolog 1B"/>
    <property type="match status" value="1"/>
</dbReference>
<dbReference type="FunFam" id="1.20.5.110:FF:000002">
    <property type="entry name" value="Vesicle transport through interaction with t-SNAREsB"/>
    <property type="match status" value="1"/>
</dbReference>
<dbReference type="Gene3D" id="1.20.5.110">
    <property type="match status" value="1"/>
</dbReference>
<dbReference type="Gene3D" id="1.20.58.400">
    <property type="entry name" value="t-snare proteins"/>
    <property type="match status" value="1"/>
</dbReference>
<dbReference type="InterPro" id="IPR027027">
    <property type="entry name" value="GOSR2/Membrin/Bos1"/>
</dbReference>
<dbReference type="InterPro" id="IPR010989">
    <property type="entry name" value="SNARE"/>
</dbReference>
<dbReference type="InterPro" id="IPR000727">
    <property type="entry name" value="T_SNARE_dom"/>
</dbReference>
<dbReference type="InterPro" id="IPR038407">
    <property type="entry name" value="v-SNARE_N_sf"/>
</dbReference>
<dbReference type="InterPro" id="IPR007705">
    <property type="entry name" value="Vesicle_trsprt_v-SNARE_N"/>
</dbReference>
<dbReference type="PANTHER" id="PTHR21230:SF89">
    <property type="entry name" value="VESICLE TRANSPORT THROUGH INTERACTION WITH T-SNARES HOMOLOG 1B"/>
    <property type="match status" value="1"/>
</dbReference>
<dbReference type="PANTHER" id="PTHR21230">
    <property type="entry name" value="VESICLE TRANSPORT V-SNARE PROTEIN VTI1-RELATED"/>
    <property type="match status" value="1"/>
</dbReference>
<dbReference type="Pfam" id="PF05008">
    <property type="entry name" value="V-SNARE"/>
    <property type="match status" value="1"/>
</dbReference>
<dbReference type="Pfam" id="PF12352">
    <property type="entry name" value="V-SNARE_C"/>
    <property type="match status" value="1"/>
</dbReference>
<dbReference type="PIRSF" id="PIRSF028865">
    <property type="entry name" value="Membrin-2"/>
    <property type="match status" value="1"/>
</dbReference>
<dbReference type="SMART" id="SM00397">
    <property type="entry name" value="t_SNARE"/>
    <property type="match status" value="1"/>
</dbReference>
<dbReference type="SUPFAM" id="SSF58038">
    <property type="entry name" value="SNARE fusion complex"/>
    <property type="match status" value="1"/>
</dbReference>
<dbReference type="SUPFAM" id="SSF47661">
    <property type="entry name" value="t-snare proteins"/>
    <property type="match status" value="1"/>
</dbReference>
<comment type="function">
    <text evidence="5 6">V-SNARE that mediates vesicle transport pathways through interactions with t-SNAREs on the target membrane. These interactions are proposed to mediate aspects of the specificity of vesicle trafficking and to promote fusion of the lipid bilayers.</text>
</comment>
<comment type="subunit">
    <text evidence="1 2">Forms a SNARE complex with STX7, STX8 and VAMP8 which functions in the homotypic fusion of late endosomes. Component of the SNARE complex composed of STX7, STX8, VAMP7 and VIT1B that is required for heterotypic fusion of late endosomes with lysosomes (By similarity). May interact with STX17. Interacts with CLINT1 (By similarity).</text>
</comment>
<comment type="subcellular location">
    <subcellularLocation>
        <location evidence="2">Early endosome membrane</location>
        <topology evidence="3">Single-pass type IV membrane protein</topology>
    </subcellularLocation>
    <subcellularLocation>
        <location evidence="2">Late endosome membrane</location>
        <topology evidence="2">Single-pass type IV membrane protein</topology>
    </subcellularLocation>
    <subcellularLocation>
        <location evidence="2">Lysosome membrane</location>
    </subcellularLocation>
    <subcellularLocation>
        <location evidence="2">Cytoplasmic granule</location>
    </subcellularLocation>
    <subcellularLocation>
        <location evidence="2">Recycling endosome membrane</location>
        <topology evidence="3">Single-pass type IV membrane protein</topology>
    </subcellularLocation>
</comment>
<comment type="similarity">
    <text evidence="4">Belongs to the VTI1 family.</text>
</comment>
<comment type="sequence caution" evidence="4">
    <conflict type="frameshift">
        <sequence resource="EMBL" id="AC111403"/>
    </conflict>
</comment>
<gene>
    <name type="primary">Vti1b</name>
    <name type="synonym">Vti1l1</name>
</gene>
<organism>
    <name type="scientific">Rattus norvegicus</name>
    <name type="common">Rat</name>
    <dbReference type="NCBI Taxonomy" id="10116"/>
    <lineage>
        <taxon>Eukaryota</taxon>
        <taxon>Metazoa</taxon>
        <taxon>Chordata</taxon>
        <taxon>Craniata</taxon>
        <taxon>Vertebrata</taxon>
        <taxon>Euteleostomi</taxon>
        <taxon>Mammalia</taxon>
        <taxon>Eutheria</taxon>
        <taxon>Euarchontoglires</taxon>
        <taxon>Glires</taxon>
        <taxon>Rodentia</taxon>
        <taxon>Myomorpha</taxon>
        <taxon>Muroidea</taxon>
        <taxon>Muridae</taxon>
        <taxon>Murinae</taxon>
        <taxon>Rattus</taxon>
    </lineage>
</organism>
<evidence type="ECO:0000250" key="1">
    <source>
        <dbReference type="UniProtKB" id="O88384"/>
    </source>
</evidence>
<evidence type="ECO:0000250" key="2">
    <source>
        <dbReference type="UniProtKB" id="Q9UEU0"/>
    </source>
</evidence>
<evidence type="ECO:0000255" key="3"/>
<evidence type="ECO:0000305" key="4"/>
<evidence type="ECO:0000305" key="5">
    <source>
    </source>
</evidence>
<evidence type="ECO:0000305" key="6">
    <source>
    </source>
</evidence>
<name>VTI1B_RAT</name>
<keyword id="KW-0007">Acetylation</keyword>
<keyword id="KW-0175">Coiled coil</keyword>
<keyword id="KW-0967">Endosome</keyword>
<keyword id="KW-0458">Lysosome</keyword>
<keyword id="KW-0472">Membrane</keyword>
<keyword id="KW-0488">Methylation</keyword>
<keyword id="KW-0597">Phosphoprotein</keyword>
<keyword id="KW-0653">Protein transport</keyword>
<keyword id="KW-1185">Reference proteome</keyword>
<keyword id="KW-0812">Transmembrane</keyword>
<keyword id="KW-1133">Transmembrane helix</keyword>
<keyword id="KW-0813">Transport</keyword>
<feature type="initiator methionine" description="Removed" evidence="2">
    <location>
        <position position="1"/>
    </location>
</feature>
<feature type="chain" id="PRO_0000218230" description="Vesicle transport through interaction with t-SNAREs homolog 1B">
    <location>
        <begin position="2"/>
        <end position="232"/>
    </location>
</feature>
<feature type="topological domain" description="Cytoplasmic" evidence="3">
    <location>
        <begin position="2"/>
        <end position="208"/>
    </location>
</feature>
<feature type="transmembrane region" description="Helical; Anchor for type IV membrane protein" evidence="3">
    <location>
        <begin position="209"/>
        <end position="229"/>
    </location>
</feature>
<feature type="topological domain" description="Vesicular" evidence="3">
    <location>
        <begin position="230"/>
        <end position="232"/>
    </location>
</feature>
<feature type="region of interest" description="Interaction with CLINT1" evidence="2">
    <location>
        <begin position="2"/>
        <end position="23"/>
    </location>
</feature>
<feature type="region of interest" description="Interaction with CLINT1" evidence="2">
    <location>
        <begin position="69"/>
        <end position="73"/>
    </location>
</feature>
<feature type="coiled-coil region" evidence="3">
    <location>
        <begin position="36"/>
        <end position="98"/>
    </location>
</feature>
<feature type="coiled-coil region" evidence="3">
    <location>
        <begin position="160"/>
        <end position="201"/>
    </location>
</feature>
<feature type="modified residue" description="N-acetylalanine" evidence="2">
    <location>
        <position position="2"/>
    </location>
</feature>
<feature type="modified residue" description="Phosphothreonine" evidence="2">
    <location>
        <position position="103"/>
    </location>
</feature>
<feature type="modified residue" description="Omega-N-methylarginine" evidence="2">
    <location>
        <position position="107"/>
    </location>
</feature>
<feature type="modified residue" description="Phosphoserine" evidence="2">
    <location>
        <position position="138"/>
    </location>
</feature>
<feature type="sequence conflict" description="In Ref. 2; BF413866." evidence="4" ref="2">
    <original>L</original>
    <variation>V</variation>
    <location>
        <position position="131"/>
    </location>
</feature>
<feature type="sequence conflict" description="In Ref. 2; BF413866." evidence="4" ref="2">
    <original>E</original>
    <variation>K</variation>
    <location>
        <position position="155"/>
    </location>
</feature>
<feature type="sequence conflict" description="In Ref. 2; BF413866." evidence="4" ref="2">
    <original>E</original>
    <variation>K</variation>
    <location>
        <position position="162"/>
    </location>
</feature>
<accession>P58200</accession>
<sequence length="232" mass="26703">MATSAASSEHFEKLHEIFRGLLEDLQGVPERLLGTAGTEEKKKLVRDFDEKQQEANETLAEMEEELRYAPLTFRNSMMSKLRNYRKDLAKLHREVRSTPLTATPGGRGDLKFGTYTLENEHLNRLQSQRALLLQGTESLNRATQSIERSHRIAAETDQIGSEIIEELGEQRDQLERTKSRLVNTNENLSKSRKILRSMSRKVITNKLLLSVIIVLELAILVGLVYYKFFRHH</sequence>